<evidence type="ECO:0000255" key="1">
    <source>
        <dbReference type="HAMAP-Rule" id="MF_00191"/>
    </source>
</evidence>
<proteinExistence type="inferred from homology"/>
<name>ISPH_BARHE</name>
<organism>
    <name type="scientific">Bartonella henselae (strain ATCC 49882 / DSM 28221 / CCUG 30454 / Houston 1)</name>
    <name type="common">Rochalimaea henselae</name>
    <dbReference type="NCBI Taxonomy" id="283166"/>
    <lineage>
        <taxon>Bacteria</taxon>
        <taxon>Pseudomonadati</taxon>
        <taxon>Pseudomonadota</taxon>
        <taxon>Alphaproteobacteria</taxon>
        <taxon>Hyphomicrobiales</taxon>
        <taxon>Bartonellaceae</taxon>
        <taxon>Bartonella</taxon>
    </lineage>
</organism>
<protein>
    <recommendedName>
        <fullName evidence="1">4-hydroxy-3-methylbut-2-enyl diphosphate reductase</fullName>
        <shortName evidence="1">HMBPP reductase</shortName>
        <ecNumber evidence="1">1.17.7.4</ecNumber>
    </recommendedName>
</protein>
<reference key="1">
    <citation type="journal article" date="2004" name="Proc. Natl. Acad. Sci. U.S.A.">
        <title>The louse-borne human pathogen Bartonella quintana is a genomic derivative of the zoonotic agent Bartonella henselae.</title>
        <authorList>
            <person name="Alsmark U.C.M."/>
            <person name="Frank A.C."/>
            <person name="Karlberg E.O."/>
            <person name="Legault B.-A."/>
            <person name="Ardell D.H."/>
            <person name="Canbaeck B."/>
            <person name="Eriksson A.-S."/>
            <person name="Naeslund A.K."/>
            <person name="Handley S.A."/>
            <person name="Huvet M."/>
            <person name="La Scola B."/>
            <person name="Holmberg M."/>
            <person name="Andersson S.G.E."/>
        </authorList>
    </citation>
    <scope>NUCLEOTIDE SEQUENCE [LARGE SCALE GENOMIC DNA]</scope>
    <source>
        <strain>ATCC 49882 / DSM 28221 / CCUG 30454 / Houston 1</strain>
    </source>
</reference>
<feature type="chain" id="PRO_0000128778" description="4-hydroxy-3-methylbut-2-enyl diphosphate reductase">
    <location>
        <begin position="1"/>
        <end position="343"/>
    </location>
</feature>
<feature type="active site" description="Proton donor" evidence="1">
    <location>
        <position position="135"/>
    </location>
</feature>
<feature type="binding site" evidence="1">
    <location>
        <position position="18"/>
    </location>
    <ligand>
        <name>[4Fe-4S] cluster</name>
        <dbReference type="ChEBI" id="CHEBI:49883"/>
    </ligand>
</feature>
<feature type="binding site" evidence="1">
    <location>
        <position position="47"/>
    </location>
    <ligand>
        <name>(2E)-4-hydroxy-3-methylbut-2-enyl diphosphate</name>
        <dbReference type="ChEBI" id="CHEBI:128753"/>
    </ligand>
</feature>
<feature type="binding site" evidence="1">
    <location>
        <position position="47"/>
    </location>
    <ligand>
        <name>dimethylallyl diphosphate</name>
        <dbReference type="ChEBI" id="CHEBI:57623"/>
    </ligand>
</feature>
<feature type="binding site" evidence="1">
    <location>
        <position position="47"/>
    </location>
    <ligand>
        <name>isopentenyl diphosphate</name>
        <dbReference type="ChEBI" id="CHEBI:128769"/>
    </ligand>
</feature>
<feature type="binding site" evidence="1">
    <location>
        <position position="83"/>
    </location>
    <ligand>
        <name>(2E)-4-hydroxy-3-methylbut-2-enyl diphosphate</name>
        <dbReference type="ChEBI" id="CHEBI:128753"/>
    </ligand>
</feature>
<feature type="binding site" evidence="1">
    <location>
        <position position="83"/>
    </location>
    <ligand>
        <name>dimethylallyl diphosphate</name>
        <dbReference type="ChEBI" id="CHEBI:57623"/>
    </ligand>
</feature>
<feature type="binding site" evidence="1">
    <location>
        <position position="83"/>
    </location>
    <ligand>
        <name>isopentenyl diphosphate</name>
        <dbReference type="ChEBI" id="CHEBI:128769"/>
    </ligand>
</feature>
<feature type="binding site" evidence="1">
    <location>
        <position position="105"/>
    </location>
    <ligand>
        <name>[4Fe-4S] cluster</name>
        <dbReference type="ChEBI" id="CHEBI:49883"/>
    </ligand>
</feature>
<feature type="binding site" evidence="1">
    <location>
        <position position="133"/>
    </location>
    <ligand>
        <name>(2E)-4-hydroxy-3-methylbut-2-enyl diphosphate</name>
        <dbReference type="ChEBI" id="CHEBI:128753"/>
    </ligand>
</feature>
<feature type="binding site" evidence="1">
    <location>
        <position position="133"/>
    </location>
    <ligand>
        <name>dimethylallyl diphosphate</name>
        <dbReference type="ChEBI" id="CHEBI:57623"/>
    </ligand>
</feature>
<feature type="binding site" evidence="1">
    <location>
        <position position="133"/>
    </location>
    <ligand>
        <name>isopentenyl diphosphate</name>
        <dbReference type="ChEBI" id="CHEBI:128769"/>
    </ligand>
</feature>
<feature type="binding site" evidence="1">
    <location>
        <position position="174"/>
    </location>
    <ligand>
        <name>(2E)-4-hydroxy-3-methylbut-2-enyl diphosphate</name>
        <dbReference type="ChEBI" id="CHEBI:128753"/>
    </ligand>
</feature>
<feature type="binding site" evidence="1">
    <location>
        <position position="204"/>
    </location>
    <ligand>
        <name>[4Fe-4S] cluster</name>
        <dbReference type="ChEBI" id="CHEBI:49883"/>
    </ligand>
</feature>
<feature type="binding site" evidence="1">
    <location>
        <position position="232"/>
    </location>
    <ligand>
        <name>(2E)-4-hydroxy-3-methylbut-2-enyl diphosphate</name>
        <dbReference type="ChEBI" id="CHEBI:128753"/>
    </ligand>
</feature>
<feature type="binding site" evidence="1">
    <location>
        <position position="232"/>
    </location>
    <ligand>
        <name>dimethylallyl diphosphate</name>
        <dbReference type="ChEBI" id="CHEBI:57623"/>
    </ligand>
</feature>
<feature type="binding site" evidence="1">
    <location>
        <position position="232"/>
    </location>
    <ligand>
        <name>isopentenyl diphosphate</name>
        <dbReference type="ChEBI" id="CHEBI:128769"/>
    </ligand>
</feature>
<feature type="binding site" evidence="1">
    <location>
        <position position="233"/>
    </location>
    <ligand>
        <name>(2E)-4-hydroxy-3-methylbut-2-enyl diphosphate</name>
        <dbReference type="ChEBI" id="CHEBI:128753"/>
    </ligand>
</feature>
<feature type="binding site" evidence="1">
    <location>
        <position position="233"/>
    </location>
    <ligand>
        <name>dimethylallyl diphosphate</name>
        <dbReference type="ChEBI" id="CHEBI:57623"/>
    </ligand>
</feature>
<feature type="binding site" evidence="1">
    <location>
        <position position="233"/>
    </location>
    <ligand>
        <name>isopentenyl diphosphate</name>
        <dbReference type="ChEBI" id="CHEBI:128769"/>
    </ligand>
</feature>
<feature type="binding site" evidence="1">
    <location>
        <position position="234"/>
    </location>
    <ligand>
        <name>(2E)-4-hydroxy-3-methylbut-2-enyl diphosphate</name>
        <dbReference type="ChEBI" id="CHEBI:128753"/>
    </ligand>
</feature>
<feature type="binding site" evidence="1">
    <location>
        <position position="234"/>
    </location>
    <ligand>
        <name>dimethylallyl diphosphate</name>
        <dbReference type="ChEBI" id="CHEBI:57623"/>
    </ligand>
</feature>
<feature type="binding site" evidence="1">
    <location>
        <position position="234"/>
    </location>
    <ligand>
        <name>isopentenyl diphosphate</name>
        <dbReference type="ChEBI" id="CHEBI:128769"/>
    </ligand>
</feature>
<feature type="binding site" evidence="1">
    <location>
        <position position="277"/>
    </location>
    <ligand>
        <name>(2E)-4-hydroxy-3-methylbut-2-enyl diphosphate</name>
        <dbReference type="ChEBI" id="CHEBI:128753"/>
    </ligand>
</feature>
<feature type="binding site" evidence="1">
    <location>
        <position position="277"/>
    </location>
    <ligand>
        <name>dimethylallyl diphosphate</name>
        <dbReference type="ChEBI" id="CHEBI:57623"/>
    </ligand>
</feature>
<feature type="binding site" evidence="1">
    <location>
        <position position="277"/>
    </location>
    <ligand>
        <name>isopentenyl diphosphate</name>
        <dbReference type="ChEBI" id="CHEBI:128769"/>
    </ligand>
</feature>
<accession>Q6G4C5</accession>
<comment type="function">
    <text evidence="1">Catalyzes the conversion of 1-hydroxy-2-methyl-2-(E)-butenyl 4-diphosphate (HMBPP) into a mixture of isopentenyl diphosphate (IPP) and dimethylallyl diphosphate (DMAPP). Acts in the terminal step of the DOXP/MEP pathway for isoprenoid precursor biosynthesis.</text>
</comment>
<comment type="catalytic activity">
    <reaction evidence="1">
        <text>isopentenyl diphosphate + 2 oxidized [2Fe-2S]-[ferredoxin] + H2O = (2E)-4-hydroxy-3-methylbut-2-enyl diphosphate + 2 reduced [2Fe-2S]-[ferredoxin] + 2 H(+)</text>
        <dbReference type="Rhea" id="RHEA:24488"/>
        <dbReference type="Rhea" id="RHEA-COMP:10000"/>
        <dbReference type="Rhea" id="RHEA-COMP:10001"/>
        <dbReference type="ChEBI" id="CHEBI:15377"/>
        <dbReference type="ChEBI" id="CHEBI:15378"/>
        <dbReference type="ChEBI" id="CHEBI:33737"/>
        <dbReference type="ChEBI" id="CHEBI:33738"/>
        <dbReference type="ChEBI" id="CHEBI:128753"/>
        <dbReference type="ChEBI" id="CHEBI:128769"/>
        <dbReference type="EC" id="1.17.7.4"/>
    </reaction>
</comment>
<comment type="catalytic activity">
    <reaction evidence="1">
        <text>dimethylallyl diphosphate + 2 oxidized [2Fe-2S]-[ferredoxin] + H2O = (2E)-4-hydroxy-3-methylbut-2-enyl diphosphate + 2 reduced [2Fe-2S]-[ferredoxin] + 2 H(+)</text>
        <dbReference type="Rhea" id="RHEA:24825"/>
        <dbReference type="Rhea" id="RHEA-COMP:10000"/>
        <dbReference type="Rhea" id="RHEA-COMP:10001"/>
        <dbReference type="ChEBI" id="CHEBI:15377"/>
        <dbReference type="ChEBI" id="CHEBI:15378"/>
        <dbReference type="ChEBI" id="CHEBI:33737"/>
        <dbReference type="ChEBI" id="CHEBI:33738"/>
        <dbReference type="ChEBI" id="CHEBI:57623"/>
        <dbReference type="ChEBI" id="CHEBI:128753"/>
        <dbReference type="EC" id="1.17.7.4"/>
    </reaction>
</comment>
<comment type="cofactor">
    <cofactor evidence="1">
        <name>[4Fe-4S] cluster</name>
        <dbReference type="ChEBI" id="CHEBI:49883"/>
    </cofactor>
    <text evidence="1">Binds 1 [4Fe-4S] cluster per subunit.</text>
</comment>
<comment type="pathway">
    <text evidence="1">Isoprenoid biosynthesis; dimethylallyl diphosphate biosynthesis; dimethylallyl diphosphate from (2E)-4-hydroxy-3-methylbutenyl diphosphate: step 1/1.</text>
</comment>
<comment type="pathway">
    <text evidence="1">Isoprenoid biosynthesis; isopentenyl diphosphate biosynthesis via DXP pathway; isopentenyl diphosphate from 1-deoxy-D-xylulose 5-phosphate: step 6/6.</text>
</comment>
<comment type="similarity">
    <text evidence="1">Belongs to the IspH family.</text>
</comment>
<gene>
    <name evidence="1" type="primary">ispH</name>
    <name type="synonym">lytB</name>
    <name type="ordered locus">BH04410</name>
</gene>
<keyword id="KW-0004">4Fe-4S</keyword>
<keyword id="KW-0408">Iron</keyword>
<keyword id="KW-0411">Iron-sulfur</keyword>
<keyword id="KW-0414">Isoprene biosynthesis</keyword>
<keyword id="KW-0479">Metal-binding</keyword>
<keyword id="KW-0560">Oxidoreductase</keyword>
<dbReference type="EC" id="1.17.7.4" evidence="1"/>
<dbReference type="EMBL" id="BX897699">
    <property type="protein sequence ID" value="CAF27250.1"/>
    <property type="molecule type" value="Genomic_DNA"/>
</dbReference>
<dbReference type="RefSeq" id="WP_011180374.1">
    <property type="nucleotide sequence ID" value="NZ_LRIJ02000001.1"/>
</dbReference>
<dbReference type="SMR" id="Q6G4C5"/>
<dbReference type="PaxDb" id="283166-BH04410"/>
<dbReference type="EnsemblBacteria" id="CAF27250">
    <property type="protein sequence ID" value="CAF27250"/>
    <property type="gene ID" value="BH04410"/>
</dbReference>
<dbReference type="GeneID" id="92985099"/>
<dbReference type="KEGG" id="bhe:BH04410"/>
<dbReference type="eggNOG" id="COG0761">
    <property type="taxonomic scope" value="Bacteria"/>
</dbReference>
<dbReference type="OrthoDB" id="9804068at2"/>
<dbReference type="UniPathway" id="UPA00056">
    <property type="reaction ID" value="UER00097"/>
</dbReference>
<dbReference type="UniPathway" id="UPA00059">
    <property type="reaction ID" value="UER00105"/>
</dbReference>
<dbReference type="Proteomes" id="UP000000421">
    <property type="component" value="Chromosome"/>
</dbReference>
<dbReference type="GO" id="GO:0051539">
    <property type="term" value="F:4 iron, 4 sulfur cluster binding"/>
    <property type="evidence" value="ECO:0007669"/>
    <property type="project" value="UniProtKB-UniRule"/>
</dbReference>
<dbReference type="GO" id="GO:0051745">
    <property type="term" value="F:4-hydroxy-3-methylbut-2-enyl diphosphate reductase activity"/>
    <property type="evidence" value="ECO:0007669"/>
    <property type="project" value="UniProtKB-UniRule"/>
</dbReference>
<dbReference type="GO" id="GO:0046872">
    <property type="term" value="F:metal ion binding"/>
    <property type="evidence" value="ECO:0007669"/>
    <property type="project" value="UniProtKB-KW"/>
</dbReference>
<dbReference type="GO" id="GO:0050992">
    <property type="term" value="P:dimethylallyl diphosphate biosynthetic process"/>
    <property type="evidence" value="ECO:0007669"/>
    <property type="project" value="UniProtKB-UniRule"/>
</dbReference>
<dbReference type="GO" id="GO:0019288">
    <property type="term" value="P:isopentenyl diphosphate biosynthetic process, methylerythritol 4-phosphate pathway"/>
    <property type="evidence" value="ECO:0007669"/>
    <property type="project" value="UniProtKB-UniRule"/>
</dbReference>
<dbReference type="GO" id="GO:0016114">
    <property type="term" value="P:terpenoid biosynthetic process"/>
    <property type="evidence" value="ECO:0007669"/>
    <property type="project" value="UniProtKB-UniRule"/>
</dbReference>
<dbReference type="CDD" id="cd13944">
    <property type="entry name" value="lytB_ispH"/>
    <property type="match status" value="1"/>
</dbReference>
<dbReference type="Gene3D" id="3.40.50.11270">
    <property type="match status" value="1"/>
</dbReference>
<dbReference type="Gene3D" id="3.40.1010.20">
    <property type="entry name" value="4-hydroxy-3-methylbut-2-enyl diphosphate reductase, catalytic domain"/>
    <property type="match status" value="2"/>
</dbReference>
<dbReference type="HAMAP" id="MF_00191">
    <property type="entry name" value="IspH"/>
    <property type="match status" value="1"/>
</dbReference>
<dbReference type="InterPro" id="IPR003451">
    <property type="entry name" value="LytB/IspH"/>
</dbReference>
<dbReference type="NCBIfam" id="TIGR00216">
    <property type="entry name" value="ispH_lytB"/>
    <property type="match status" value="1"/>
</dbReference>
<dbReference type="NCBIfam" id="NF002190">
    <property type="entry name" value="PRK01045.1-4"/>
    <property type="match status" value="1"/>
</dbReference>
<dbReference type="PANTHER" id="PTHR30426">
    <property type="entry name" value="4-HYDROXY-3-METHYLBUT-2-ENYL DIPHOSPHATE REDUCTASE"/>
    <property type="match status" value="1"/>
</dbReference>
<dbReference type="PANTHER" id="PTHR30426:SF0">
    <property type="entry name" value="4-HYDROXY-3-METHYLBUT-2-ENYL DIPHOSPHATE REDUCTASE"/>
    <property type="match status" value="1"/>
</dbReference>
<dbReference type="Pfam" id="PF02401">
    <property type="entry name" value="LYTB"/>
    <property type="match status" value="1"/>
</dbReference>
<sequence>MSILSPLIIRLCNPRGFCAGVDRAIQIVLLALKKYGAPVYVRHEIVHNRYVVEGLQQRGAIFVEELDEIPEEHRNQPVVFSAHGVPKSVPEQADCYNLFYLDATCPLVSKVHKQAMRHQRHRRHVILIGHAGHPEVIGTMGQLEKGGVTLIETVEDALHYQPDDPDNLGFVTQTTLSVEDTAEILDVLQRRFPALEPPAAESICYATTNRQNAVKAAALGSDLFLIVGAPNSSNSRRLVEVAERSGARQSILVQRADEIDFDHLGALSVVSLSAGASAPEIIVDEIISAFRKRYNVTIELAETVVENETFLVNRELRDVVLTPQDMAFMNGRSEMLKNKNQDM</sequence>